<proteinExistence type="inferred from homology"/>
<feature type="chain" id="PRO_1000055367" description="Large ribosomal subunit protein uL13">
    <location>
        <begin position="1"/>
        <end position="142"/>
    </location>
</feature>
<reference key="1">
    <citation type="submission" date="2007-08" db="EMBL/GenBank/DDBJ databases">
        <authorList>
            <consortium name="The Citrobacter koseri Genome Sequencing Project"/>
            <person name="McClelland M."/>
            <person name="Sanderson E.K."/>
            <person name="Porwollik S."/>
            <person name="Spieth J."/>
            <person name="Clifton W.S."/>
            <person name="Latreille P."/>
            <person name="Courtney L."/>
            <person name="Wang C."/>
            <person name="Pepin K."/>
            <person name="Bhonagiri V."/>
            <person name="Nash W."/>
            <person name="Johnson M."/>
            <person name="Thiruvilangam P."/>
            <person name="Wilson R."/>
        </authorList>
    </citation>
    <scope>NUCLEOTIDE SEQUENCE [LARGE SCALE GENOMIC DNA]</scope>
    <source>
        <strain>ATCC BAA-895 / CDC 4225-83 / SGSC4696</strain>
    </source>
</reference>
<evidence type="ECO:0000255" key="1">
    <source>
        <dbReference type="HAMAP-Rule" id="MF_01366"/>
    </source>
</evidence>
<evidence type="ECO:0000305" key="2"/>
<organism>
    <name type="scientific">Citrobacter koseri (strain ATCC BAA-895 / CDC 4225-83 / SGSC4696)</name>
    <dbReference type="NCBI Taxonomy" id="290338"/>
    <lineage>
        <taxon>Bacteria</taxon>
        <taxon>Pseudomonadati</taxon>
        <taxon>Pseudomonadota</taxon>
        <taxon>Gammaproteobacteria</taxon>
        <taxon>Enterobacterales</taxon>
        <taxon>Enterobacteriaceae</taxon>
        <taxon>Citrobacter</taxon>
    </lineage>
</organism>
<keyword id="KW-1185">Reference proteome</keyword>
<keyword id="KW-0687">Ribonucleoprotein</keyword>
<keyword id="KW-0689">Ribosomal protein</keyword>
<dbReference type="EMBL" id="CP000822">
    <property type="protein sequence ID" value="ABV15684.1"/>
    <property type="molecule type" value="Genomic_DNA"/>
</dbReference>
<dbReference type="RefSeq" id="WP_000847556.1">
    <property type="nucleotide sequence ID" value="NC_009792.1"/>
</dbReference>
<dbReference type="SMR" id="A8AQC1"/>
<dbReference type="STRING" id="290338.CKO_04634"/>
<dbReference type="GeneID" id="84234927"/>
<dbReference type="KEGG" id="cko:CKO_04634"/>
<dbReference type="HOGENOM" id="CLU_082184_2_2_6"/>
<dbReference type="OrthoDB" id="9801330at2"/>
<dbReference type="Proteomes" id="UP000008148">
    <property type="component" value="Chromosome"/>
</dbReference>
<dbReference type="GO" id="GO:0022625">
    <property type="term" value="C:cytosolic large ribosomal subunit"/>
    <property type="evidence" value="ECO:0007669"/>
    <property type="project" value="TreeGrafter"/>
</dbReference>
<dbReference type="GO" id="GO:0003729">
    <property type="term" value="F:mRNA binding"/>
    <property type="evidence" value="ECO:0007669"/>
    <property type="project" value="TreeGrafter"/>
</dbReference>
<dbReference type="GO" id="GO:0003735">
    <property type="term" value="F:structural constituent of ribosome"/>
    <property type="evidence" value="ECO:0007669"/>
    <property type="project" value="InterPro"/>
</dbReference>
<dbReference type="GO" id="GO:0017148">
    <property type="term" value="P:negative regulation of translation"/>
    <property type="evidence" value="ECO:0007669"/>
    <property type="project" value="TreeGrafter"/>
</dbReference>
<dbReference type="GO" id="GO:0006412">
    <property type="term" value="P:translation"/>
    <property type="evidence" value="ECO:0007669"/>
    <property type="project" value="UniProtKB-UniRule"/>
</dbReference>
<dbReference type="CDD" id="cd00392">
    <property type="entry name" value="Ribosomal_L13"/>
    <property type="match status" value="1"/>
</dbReference>
<dbReference type="FunFam" id="3.90.1180.10:FF:000001">
    <property type="entry name" value="50S ribosomal protein L13"/>
    <property type="match status" value="1"/>
</dbReference>
<dbReference type="Gene3D" id="3.90.1180.10">
    <property type="entry name" value="Ribosomal protein L13"/>
    <property type="match status" value="1"/>
</dbReference>
<dbReference type="HAMAP" id="MF_01366">
    <property type="entry name" value="Ribosomal_uL13"/>
    <property type="match status" value="1"/>
</dbReference>
<dbReference type="InterPro" id="IPR005822">
    <property type="entry name" value="Ribosomal_uL13"/>
</dbReference>
<dbReference type="InterPro" id="IPR005823">
    <property type="entry name" value="Ribosomal_uL13_bac-type"/>
</dbReference>
<dbReference type="InterPro" id="IPR023563">
    <property type="entry name" value="Ribosomal_uL13_CS"/>
</dbReference>
<dbReference type="InterPro" id="IPR036899">
    <property type="entry name" value="Ribosomal_uL13_sf"/>
</dbReference>
<dbReference type="NCBIfam" id="TIGR01066">
    <property type="entry name" value="rplM_bact"/>
    <property type="match status" value="1"/>
</dbReference>
<dbReference type="PANTHER" id="PTHR11545:SF2">
    <property type="entry name" value="LARGE RIBOSOMAL SUBUNIT PROTEIN UL13M"/>
    <property type="match status" value="1"/>
</dbReference>
<dbReference type="PANTHER" id="PTHR11545">
    <property type="entry name" value="RIBOSOMAL PROTEIN L13"/>
    <property type="match status" value="1"/>
</dbReference>
<dbReference type="Pfam" id="PF00572">
    <property type="entry name" value="Ribosomal_L13"/>
    <property type="match status" value="1"/>
</dbReference>
<dbReference type="PIRSF" id="PIRSF002181">
    <property type="entry name" value="Ribosomal_L13"/>
    <property type="match status" value="1"/>
</dbReference>
<dbReference type="SUPFAM" id="SSF52161">
    <property type="entry name" value="Ribosomal protein L13"/>
    <property type="match status" value="1"/>
</dbReference>
<dbReference type="PROSITE" id="PS00783">
    <property type="entry name" value="RIBOSOMAL_L13"/>
    <property type="match status" value="1"/>
</dbReference>
<protein>
    <recommendedName>
        <fullName evidence="1">Large ribosomal subunit protein uL13</fullName>
    </recommendedName>
    <alternativeName>
        <fullName evidence="2">50S ribosomal protein L13</fullName>
    </alternativeName>
</protein>
<accession>A8AQC1</accession>
<name>RL13_CITK8</name>
<gene>
    <name evidence="1" type="primary">rplM</name>
    <name type="ordered locus">CKO_04634</name>
</gene>
<sequence>MKTFTAKPETVKRDWYVVDATGKTLGRLATELALRLRGKHKAEYTPHVDTGDYIIVLNADKVAVTGNKRTDKVYYHHTGHIGGIKQATFEEMIARRPERVIEIAVKGMLPKGPLGRAMFRKLKVYAGNEHNHAAQQPQVLDI</sequence>
<comment type="function">
    <text evidence="1">This protein is one of the early assembly proteins of the 50S ribosomal subunit, although it is not seen to bind rRNA by itself. It is important during the early stages of 50S assembly.</text>
</comment>
<comment type="subunit">
    <text evidence="1">Part of the 50S ribosomal subunit.</text>
</comment>
<comment type="similarity">
    <text evidence="1">Belongs to the universal ribosomal protein uL13 family.</text>
</comment>